<reference key="1">
    <citation type="submission" date="2005-08" db="EMBL/GenBank/DDBJ databases">
        <title>Complete sequence of Synechococcus sp. CC9902.</title>
        <authorList>
            <person name="Copeland A."/>
            <person name="Lucas S."/>
            <person name="Lapidus A."/>
            <person name="Barry K."/>
            <person name="Detter J.C."/>
            <person name="Glavina T."/>
            <person name="Hammon N."/>
            <person name="Israni S."/>
            <person name="Pitluck S."/>
            <person name="Martinez M."/>
            <person name="Schmutz J."/>
            <person name="Larimer F."/>
            <person name="Land M."/>
            <person name="Kyrpides N."/>
            <person name="Ivanova N."/>
            <person name="Richardson P."/>
        </authorList>
    </citation>
    <scope>NUCLEOTIDE SEQUENCE [LARGE SCALE GENOMIC DNA]</scope>
    <source>
        <strain>CC9902</strain>
    </source>
</reference>
<evidence type="ECO:0000255" key="1">
    <source>
        <dbReference type="HAMAP-Rule" id="MF_00181"/>
    </source>
</evidence>
<dbReference type="EC" id="3.4.11.1" evidence="1"/>
<dbReference type="EC" id="3.4.11.10" evidence="1"/>
<dbReference type="EMBL" id="CP000097">
    <property type="protein sequence ID" value="ABB25529.1"/>
    <property type="molecule type" value="Genomic_DNA"/>
</dbReference>
<dbReference type="RefSeq" id="WP_011359376.1">
    <property type="nucleotide sequence ID" value="NC_007513.1"/>
</dbReference>
<dbReference type="SMR" id="Q3AZE8"/>
<dbReference type="STRING" id="316279.Syncc9902_0561"/>
<dbReference type="MEROPS" id="M17.A03"/>
<dbReference type="KEGG" id="sye:Syncc9902_0561"/>
<dbReference type="eggNOG" id="COG0260">
    <property type="taxonomic scope" value="Bacteria"/>
</dbReference>
<dbReference type="HOGENOM" id="CLU_013734_5_1_3"/>
<dbReference type="OrthoDB" id="9809354at2"/>
<dbReference type="Proteomes" id="UP000002712">
    <property type="component" value="Chromosome"/>
</dbReference>
<dbReference type="GO" id="GO:0005737">
    <property type="term" value="C:cytoplasm"/>
    <property type="evidence" value="ECO:0007669"/>
    <property type="project" value="UniProtKB-SubCell"/>
</dbReference>
<dbReference type="GO" id="GO:0030145">
    <property type="term" value="F:manganese ion binding"/>
    <property type="evidence" value="ECO:0007669"/>
    <property type="project" value="UniProtKB-UniRule"/>
</dbReference>
<dbReference type="GO" id="GO:0070006">
    <property type="term" value="F:metalloaminopeptidase activity"/>
    <property type="evidence" value="ECO:0007669"/>
    <property type="project" value="InterPro"/>
</dbReference>
<dbReference type="GO" id="GO:0006508">
    <property type="term" value="P:proteolysis"/>
    <property type="evidence" value="ECO:0007669"/>
    <property type="project" value="UniProtKB-KW"/>
</dbReference>
<dbReference type="CDD" id="cd00433">
    <property type="entry name" value="Peptidase_M17"/>
    <property type="match status" value="1"/>
</dbReference>
<dbReference type="Gene3D" id="3.40.220.10">
    <property type="entry name" value="Leucine Aminopeptidase, subunit E, domain 1"/>
    <property type="match status" value="1"/>
</dbReference>
<dbReference type="Gene3D" id="3.40.630.10">
    <property type="entry name" value="Zn peptidases"/>
    <property type="match status" value="1"/>
</dbReference>
<dbReference type="HAMAP" id="MF_00181">
    <property type="entry name" value="Cytosol_peptidase_M17"/>
    <property type="match status" value="1"/>
</dbReference>
<dbReference type="InterPro" id="IPR011356">
    <property type="entry name" value="Leucine_aapep/pepB"/>
</dbReference>
<dbReference type="InterPro" id="IPR043472">
    <property type="entry name" value="Macro_dom-like"/>
</dbReference>
<dbReference type="InterPro" id="IPR000819">
    <property type="entry name" value="Peptidase_M17_C"/>
</dbReference>
<dbReference type="InterPro" id="IPR023042">
    <property type="entry name" value="Peptidase_M17_leu_NH2_pept"/>
</dbReference>
<dbReference type="InterPro" id="IPR008283">
    <property type="entry name" value="Peptidase_M17_N"/>
</dbReference>
<dbReference type="NCBIfam" id="NF002073">
    <property type="entry name" value="PRK00913.1-2"/>
    <property type="match status" value="1"/>
</dbReference>
<dbReference type="NCBIfam" id="NF002076">
    <property type="entry name" value="PRK00913.2-3"/>
    <property type="match status" value="1"/>
</dbReference>
<dbReference type="PANTHER" id="PTHR11963:SF23">
    <property type="entry name" value="CYTOSOL AMINOPEPTIDASE"/>
    <property type="match status" value="1"/>
</dbReference>
<dbReference type="PANTHER" id="PTHR11963">
    <property type="entry name" value="LEUCINE AMINOPEPTIDASE-RELATED"/>
    <property type="match status" value="1"/>
</dbReference>
<dbReference type="Pfam" id="PF00883">
    <property type="entry name" value="Peptidase_M17"/>
    <property type="match status" value="1"/>
</dbReference>
<dbReference type="Pfam" id="PF02789">
    <property type="entry name" value="Peptidase_M17_N"/>
    <property type="match status" value="1"/>
</dbReference>
<dbReference type="PRINTS" id="PR00481">
    <property type="entry name" value="LAMNOPPTDASE"/>
</dbReference>
<dbReference type="SUPFAM" id="SSF52949">
    <property type="entry name" value="Macro domain-like"/>
    <property type="match status" value="1"/>
</dbReference>
<dbReference type="SUPFAM" id="SSF53187">
    <property type="entry name" value="Zn-dependent exopeptidases"/>
    <property type="match status" value="1"/>
</dbReference>
<dbReference type="PROSITE" id="PS00631">
    <property type="entry name" value="CYTOSOL_AP"/>
    <property type="match status" value="1"/>
</dbReference>
<accession>Q3AZE8</accession>
<gene>
    <name evidence="1" type="primary">pepA</name>
    <name type="ordered locus">Syncc9902_0561</name>
</gene>
<organism>
    <name type="scientific">Synechococcus sp. (strain CC9902)</name>
    <dbReference type="NCBI Taxonomy" id="316279"/>
    <lineage>
        <taxon>Bacteria</taxon>
        <taxon>Bacillati</taxon>
        <taxon>Cyanobacteriota</taxon>
        <taxon>Cyanophyceae</taxon>
        <taxon>Synechococcales</taxon>
        <taxon>Synechococcaceae</taxon>
        <taxon>Synechococcus</taxon>
    </lineage>
</organism>
<feature type="chain" id="PRO_1000019994" description="Probable cytosol aminopeptidase">
    <location>
        <begin position="1"/>
        <end position="490"/>
    </location>
</feature>
<feature type="active site" evidence="1">
    <location>
        <position position="268"/>
    </location>
</feature>
<feature type="active site" evidence="1">
    <location>
        <position position="344"/>
    </location>
</feature>
<feature type="binding site" evidence="1">
    <location>
        <position position="256"/>
    </location>
    <ligand>
        <name>Mn(2+)</name>
        <dbReference type="ChEBI" id="CHEBI:29035"/>
        <label>2</label>
    </ligand>
</feature>
<feature type="binding site" evidence="1">
    <location>
        <position position="261"/>
    </location>
    <ligand>
        <name>Mn(2+)</name>
        <dbReference type="ChEBI" id="CHEBI:29035"/>
        <label>1</label>
    </ligand>
</feature>
<feature type="binding site" evidence="1">
    <location>
        <position position="261"/>
    </location>
    <ligand>
        <name>Mn(2+)</name>
        <dbReference type="ChEBI" id="CHEBI:29035"/>
        <label>2</label>
    </ligand>
</feature>
<feature type="binding site" evidence="1">
    <location>
        <position position="280"/>
    </location>
    <ligand>
        <name>Mn(2+)</name>
        <dbReference type="ChEBI" id="CHEBI:29035"/>
        <label>2</label>
    </ligand>
</feature>
<feature type="binding site" evidence="1">
    <location>
        <position position="340"/>
    </location>
    <ligand>
        <name>Mn(2+)</name>
        <dbReference type="ChEBI" id="CHEBI:29035"/>
        <label>1</label>
    </ligand>
</feature>
<feature type="binding site" evidence="1">
    <location>
        <position position="342"/>
    </location>
    <ligand>
        <name>Mn(2+)</name>
        <dbReference type="ChEBI" id="CHEBI:29035"/>
        <label>1</label>
    </ligand>
</feature>
<feature type="binding site" evidence="1">
    <location>
        <position position="342"/>
    </location>
    <ligand>
        <name>Mn(2+)</name>
        <dbReference type="ChEBI" id="CHEBI:29035"/>
        <label>2</label>
    </ligand>
</feature>
<name>AMPA_SYNS9</name>
<comment type="function">
    <text evidence="1">Presumably involved in the processing and regular turnover of intracellular proteins. Catalyzes the removal of unsubstituted N-terminal amino acids from various peptides.</text>
</comment>
<comment type="catalytic activity">
    <reaction evidence="1">
        <text>Release of an N-terminal amino acid, Xaa-|-Yaa-, in which Xaa is preferably Leu, but may be other amino acids including Pro although not Arg or Lys, and Yaa may be Pro. Amino acid amides and methyl esters are also readily hydrolyzed, but rates on arylamides are exceedingly low.</text>
        <dbReference type="EC" id="3.4.11.1"/>
    </reaction>
</comment>
<comment type="catalytic activity">
    <reaction evidence="1">
        <text>Release of an N-terminal amino acid, preferentially leucine, but not glutamic or aspartic acids.</text>
        <dbReference type="EC" id="3.4.11.10"/>
    </reaction>
</comment>
<comment type="cofactor">
    <cofactor evidence="1">
        <name>Mn(2+)</name>
        <dbReference type="ChEBI" id="CHEBI:29035"/>
    </cofactor>
    <text evidence="1">Binds 2 manganese ions per subunit.</text>
</comment>
<comment type="subcellular location">
    <subcellularLocation>
        <location evidence="1">Cytoplasm</location>
    </subcellularLocation>
</comment>
<comment type="similarity">
    <text evidence="1">Belongs to the peptidase M17 family.</text>
</comment>
<sequence>MRLSISSTNVKEWSGDVLVVGLPKGDPSTTAVNLESRFPGVSSALNQQAFEGKTGQKLVLHPLANGNPQRLVLIGLGDADAIDLDGIRAAAAAAAQASIGCKGCLGLQLPWDSHHPDHAARISAEAVRLSLYADQRFQKEPEERRLPTALELIGLPASAAAGLEPVNATCAGVELARELVAAPPNYVTPAALAETAAALAHDYGMELTILERADCEARGMGAFLAVSQGSDLPPKFIHLIYRPEGAVKRRLALVGKGLTFDSGGYNLKVGGAQIDMMKFDMGGSASVLGAMRSIGELKPAGVEVHMVVASCENMVNGSAVHPGDIVTAANGTTIEINNTDAEGRLTLADALLYACEQKPDAVVDLATLTGACVVALGDEMAGYWSNNEALAEALDTAADAGGEGLWRMPLRQSYKKGLKSLLADMKNTGPRPGGSITAALFLKEFVSQDTAWAHIDIAGPVWSDKGKGVNPAGATGYGVRTLVNWVCAQA</sequence>
<keyword id="KW-0031">Aminopeptidase</keyword>
<keyword id="KW-0963">Cytoplasm</keyword>
<keyword id="KW-0378">Hydrolase</keyword>
<keyword id="KW-0464">Manganese</keyword>
<keyword id="KW-0479">Metal-binding</keyword>
<keyword id="KW-0645">Protease</keyword>
<keyword id="KW-1185">Reference proteome</keyword>
<proteinExistence type="inferred from homology"/>
<protein>
    <recommendedName>
        <fullName evidence="1">Probable cytosol aminopeptidase</fullName>
        <ecNumber evidence="1">3.4.11.1</ecNumber>
    </recommendedName>
    <alternativeName>
        <fullName evidence="1">Leucine aminopeptidase</fullName>
        <shortName evidence="1">LAP</shortName>
        <ecNumber evidence="1">3.4.11.10</ecNumber>
    </alternativeName>
    <alternativeName>
        <fullName evidence="1">Leucyl aminopeptidase</fullName>
    </alternativeName>
</protein>